<feature type="initiator methionine" description="Removed" evidence="1">
    <location>
        <position position="1"/>
    </location>
</feature>
<feature type="chain" id="PRO_0000158282" description="Histone H4">
    <location>
        <begin position="2"/>
        <end position="103"/>
    </location>
</feature>
<feature type="DNA-binding region">
    <location>
        <begin position="17"/>
        <end position="21"/>
    </location>
</feature>
<feature type="region of interest" description="Disordered" evidence="3">
    <location>
        <begin position="1"/>
        <end position="20"/>
    </location>
</feature>
<feature type="compositionally biased region" description="Gly residues" evidence="3">
    <location>
        <begin position="1"/>
        <end position="14"/>
    </location>
</feature>
<feature type="modified residue" description="N-acetylserine" evidence="1">
    <location>
        <position position="2"/>
    </location>
</feature>
<feature type="modified residue" description="N6-acetyl-N6-methyllysine; alternate" evidence="2">
    <location>
        <position position="6"/>
    </location>
</feature>
<feature type="modified residue" description="N6-acetyl-N6-methyllysine; alternate" evidence="2">
    <location>
        <position position="13"/>
    </location>
</feature>
<feature type="modified residue" description="N6-acetyllysine" evidence="1">
    <location>
        <position position="17"/>
    </location>
</feature>
<feature type="modified residue" description="N6-methyllysine" evidence="1">
    <location>
        <position position="21"/>
    </location>
</feature>
<keyword id="KW-0007">Acetylation</keyword>
<keyword id="KW-0158">Chromosome</keyword>
<keyword id="KW-0238">DNA-binding</keyword>
<keyword id="KW-0488">Methylation</keyword>
<keyword id="KW-0544">Nucleosome core</keyword>
<keyword id="KW-0539">Nucleus</keyword>
<proteinExistence type="inferred from homology"/>
<dbReference type="EMBL" id="Z69289">
    <property type="protein sequence ID" value="CAA93257.1"/>
    <property type="molecule type" value="Genomic_DNA"/>
</dbReference>
<dbReference type="EMBL" id="Z69290">
    <property type="protein sequence ID" value="CAA93257.1"/>
    <property type="status" value="JOINED"/>
    <property type="molecule type" value="Genomic_DNA"/>
</dbReference>
<dbReference type="SMR" id="Q27443"/>
<dbReference type="GO" id="GO:0000786">
    <property type="term" value="C:nucleosome"/>
    <property type="evidence" value="ECO:0007669"/>
    <property type="project" value="UniProtKB-KW"/>
</dbReference>
<dbReference type="GO" id="GO:0005634">
    <property type="term" value="C:nucleus"/>
    <property type="evidence" value="ECO:0007669"/>
    <property type="project" value="UniProtKB-SubCell"/>
</dbReference>
<dbReference type="GO" id="GO:0003677">
    <property type="term" value="F:DNA binding"/>
    <property type="evidence" value="ECO:0007669"/>
    <property type="project" value="UniProtKB-KW"/>
</dbReference>
<dbReference type="GO" id="GO:0046982">
    <property type="term" value="F:protein heterodimerization activity"/>
    <property type="evidence" value="ECO:0007669"/>
    <property type="project" value="InterPro"/>
</dbReference>
<dbReference type="GO" id="GO:0030527">
    <property type="term" value="F:structural constituent of chromatin"/>
    <property type="evidence" value="ECO:0007669"/>
    <property type="project" value="InterPro"/>
</dbReference>
<dbReference type="CDD" id="cd22912">
    <property type="entry name" value="HFD_H4"/>
    <property type="match status" value="1"/>
</dbReference>
<dbReference type="FunFam" id="1.10.20.10:FF:000002">
    <property type="entry name" value="Histone H4"/>
    <property type="match status" value="1"/>
</dbReference>
<dbReference type="Gene3D" id="1.10.20.10">
    <property type="entry name" value="Histone, subunit A"/>
    <property type="match status" value="1"/>
</dbReference>
<dbReference type="InterPro" id="IPR035425">
    <property type="entry name" value="CENP-T/H4_C"/>
</dbReference>
<dbReference type="InterPro" id="IPR009072">
    <property type="entry name" value="Histone-fold"/>
</dbReference>
<dbReference type="InterPro" id="IPR001951">
    <property type="entry name" value="Histone_H4"/>
</dbReference>
<dbReference type="InterPro" id="IPR019809">
    <property type="entry name" value="Histone_H4_CS"/>
</dbReference>
<dbReference type="PANTHER" id="PTHR10484">
    <property type="entry name" value="HISTONE H4"/>
    <property type="match status" value="1"/>
</dbReference>
<dbReference type="Pfam" id="PF15511">
    <property type="entry name" value="CENP-T_C"/>
    <property type="match status" value="1"/>
</dbReference>
<dbReference type="PRINTS" id="PR00623">
    <property type="entry name" value="HISTONEH4"/>
</dbReference>
<dbReference type="SMART" id="SM00417">
    <property type="entry name" value="H4"/>
    <property type="match status" value="1"/>
</dbReference>
<dbReference type="SUPFAM" id="SSF47113">
    <property type="entry name" value="Histone-fold"/>
    <property type="match status" value="1"/>
</dbReference>
<dbReference type="PROSITE" id="PS00047">
    <property type="entry name" value="HISTONE_H4"/>
    <property type="match status" value="1"/>
</dbReference>
<comment type="function">
    <text>Core component of nucleosome. Nucleosomes wrap and compact DNA into chromatin, limiting DNA accessibility to the cellular machineries which require DNA as a template. Histones thereby play a central role in transcription regulation, DNA repair, DNA replication and chromosomal stability. DNA accessibility is regulated via a complex set of post-translational modifications of histones, also called histone code, and nucleosome remodeling.</text>
</comment>
<comment type="subunit">
    <text>The nucleosome is a histone octamer containing two molecules each of H2A, H2B, H3 and H4 assembled in one H3-H4 heterotetramer and two H2A-H2B heterodimers. The octamer wraps approximately 147 bp of DNA.</text>
</comment>
<comment type="subcellular location">
    <subcellularLocation>
        <location evidence="1">Nucleus</location>
    </subcellularLocation>
    <subcellularLocation>
        <location evidence="1">Chromosome</location>
    </subcellularLocation>
</comment>
<comment type="similarity">
    <text evidence="4">Belongs to the histone H4 family.</text>
</comment>
<protein>
    <recommendedName>
        <fullName>Histone H4</fullName>
    </recommendedName>
</protein>
<sequence>MSGRGKGGKGLGKGGAKRHRKVLRDNIQGITKPAIRRLARRGGVKRISGLIYEETRSVLKVFLENVIRDAVTYCEHAKRKTVTAMDVVYALKHQGRTLYGFGG</sequence>
<name>H4_ASCSU</name>
<evidence type="ECO:0000250" key="1"/>
<evidence type="ECO:0000250" key="2">
    <source>
        <dbReference type="UniProtKB" id="P62805"/>
    </source>
</evidence>
<evidence type="ECO:0000256" key="3">
    <source>
        <dbReference type="SAM" id="MobiDB-lite"/>
    </source>
</evidence>
<evidence type="ECO:0000305" key="4"/>
<accession>Q27443</accession>
<organism>
    <name type="scientific">Ascaris suum</name>
    <name type="common">Pig roundworm</name>
    <name type="synonym">Ascaris lumbricoides</name>
    <dbReference type="NCBI Taxonomy" id="6253"/>
    <lineage>
        <taxon>Eukaryota</taxon>
        <taxon>Metazoa</taxon>
        <taxon>Ecdysozoa</taxon>
        <taxon>Nematoda</taxon>
        <taxon>Chromadorea</taxon>
        <taxon>Rhabditida</taxon>
        <taxon>Spirurina</taxon>
        <taxon>Ascaridomorpha</taxon>
        <taxon>Ascaridoidea</taxon>
        <taxon>Ascarididae</taxon>
        <taxon>Ascaris</taxon>
    </lineage>
</organism>
<reference key="1">
    <citation type="journal article" date="1997" name="Biochim. Biophys. Acta">
        <title>Histone H4 mRNA from the nematode Ascaris lumbricoides is cis-spliced and polyadenylated.</title>
        <authorList>
            <person name="Wyler-Duda P."/>
            <person name="Bernard V."/>
            <person name="Stadler M."/>
            <person name="Suter D."/>
            <person name="Schuemperli D."/>
        </authorList>
    </citation>
    <scope>NUCLEOTIDE SEQUENCE [GENOMIC DNA]</scope>
    <source>
        <tissue>Ovary</tissue>
    </source>
</reference>